<proteinExistence type="inferred from homology"/>
<keyword id="KW-0030">Aminoacyl-tRNA synthetase</keyword>
<keyword id="KW-0067">ATP-binding</keyword>
<keyword id="KW-0963">Cytoplasm</keyword>
<keyword id="KW-0436">Ligase</keyword>
<keyword id="KW-0547">Nucleotide-binding</keyword>
<keyword id="KW-0648">Protein biosynthesis</keyword>
<keyword id="KW-1185">Reference proteome</keyword>
<evidence type="ECO:0000255" key="1">
    <source>
        <dbReference type="HAMAP-Rule" id="MF_00176"/>
    </source>
</evidence>
<feature type="chain" id="PRO_1000203763" description="Serine--tRNA ligase">
    <location>
        <begin position="1"/>
        <end position="427"/>
    </location>
</feature>
<feature type="binding site" evidence="1">
    <location>
        <begin position="230"/>
        <end position="232"/>
    </location>
    <ligand>
        <name>L-serine</name>
        <dbReference type="ChEBI" id="CHEBI:33384"/>
    </ligand>
</feature>
<feature type="binding site" evidence="1">
    <location>
        <begin position="260"/>
        <end position="262"/>
    </location>
    <ligand>
        <name>ATP</name>
        <dbReference type="ChEBI" id="CHEBI:30616"/>
    </ligand>
</feature>
<feature type="binding site" evidence="1">
    <location>
        <position position="276"/>
    </location>
    <ligand>
        <name>ATP</name>
        <dbReference type="ChEBI" id="CHEBI:30616"/>
    </ligand>
</feature>
<feature type="binding site" evidence="1">
    <location>
        <position position="283"/>
    </location>
    <ligand>
        <name>L-serine</name>
        <dbReference type="ChEBI" id="CHEBI:33384"/>
    </ligand>
</feature>
<feature type="binding site" evidence="1">
    <location>
        <begin position="347"/>
        <end position="350"/>
    </location>
    <ligand>
        <name>ATP</name>
        <dbReference type="ChEBI" id="CHEBI:30616"/>
    </ligand>
</feature>
<feature type="binding site" evidence="1">
    <location>
        <position position="387"/>
    </location>
    <ligand>
        <name>L-serine</name>
        <dbReference type="ChEBI" id="CHEBI:33384"/>
    </ligand>
</feature>
<sequence>MIDVKDLIEQPEKYRASQEARGEDASLVDRVVEADAARRSSIAGFEQLRAEQKAFGKRVAQAKGEEKQALLAEVKDLAARVKEAESAAGAAEARLAELQRAFPNLIVDGVPAGGEDDFVVLKEVGTPRDFAAEGFEPRDHLELGELLGAIDMERGAKVSGARFSFLTGVGARLELALMQLGLDLALENGFVPVIPPTLVRPETMQGTGFDVEHDDEIYRLERDDLYLVGTSEVALAGFHAGEIMDVSAPVRYAGWSTCYRREAGSAGKDTRGIIRVHQFNKLEMFIYAAQEDAEAEHARLLAWEERMLGAIEVPYRVIDIAAGDLGLSAARKFDCEAWVPTQGTYRELTSTSNCTTFQARRLNIRERVRTEDGSKGGTRMVATLNGTLATTRWIVAILENHQNADGSVTVPAALRPYLGGMERFELV</sequence>
<accession>C5C878</accession>
<comment type="function">
    <text evidence="1">Catalyzes the attachment of serine to tRNA(Ser). Is also able to aminoacylate tRNA(Sec) with serine, to form the misacylated tRNA L-seryl-tRNA(Sec), which will be further converted into selenocysteinyl-tRNA(Sec).</text>
</comment>
<comment type="catalytic activity">
    <reaction evidence="1">
        <text>tRNA(Ser) + L-serine + ATP = L-seryl-tRNA(Ser) + AMP + diphosphate + H(+)</text>
        <dbReference type="Rhea" id="RHEA:12292"/>
        <dbReference type="Rhea" id="RHEA-COMP:9669"/>
        <dbReference type="Rhea" id="RHEA-COMP:9703"/>
        <dbReference type="ChEBI" id="CHEBI:15378"/>
        <dbReference type="ChEBI" id="CHEBI:30616"/>
        <dbReference type="ChEBI" id="CHEBI:33019"/>
        <dbReference type="ChEBI" id="CHEBI:33384"/>
        <dbReference type="ChEBI" id="CHEBI:78442"/>
        <dbReference type="ChEBI" id="CHEBI:78533"/>
        <dbReference type="ChEBI" id="CHEBI:456215"/>
        <dbReference type="EC" id="6.1.1.11"/>
    </reaction>
</comment>
<comment type="catalytic activity">
    <reaction evidence="1">
        <text>tRNA(Sec) + L-serine + ATP = L-seryl-tRNA(Sec) + AMP + diphosphate + H(+)</text>
        <dbReference type="Rhea" id="RHEA:42580"/>
        <dbReference type="Rhea" id="RHEA-COMP:9742"/>
        <dbReference type="Rhea" id="RHEA-COMP:10128"/>
        <dbReference type="ChEBI" id="CHEBI:15378"/>
        <dbReference type="ChEBI" id="CHEBI:30616"/>
        <dbReference type="ChEBI" id="CHEBI:33019"/>
        <dbReference type="ChEBI" id="CHEBI:33384"/>
        <dbReference type="ChEBI" id="CHEBI:78442"/>
        <dbReference type="ChEBI" id="CHEBI:78533"/>
        <dbReference type="ChEBI" id="CHEBI:456215"/>
        <dbReference type="EC" id="6.1.1.11"/>
    </reaction>
</comment>
<comment type="pathway">
    <text evidence="1">Aminoacyl-tRNA biosynthesis; selenocysteinyl-tRNA(Sec) biosynthesis; L-seryl-tRNA(Sec) from L-serine and tRNA(Sec): step 1/1.</text>
</comment>
<comment type="subunit">
    <text evidence="1">Homodimer. The tRNA molecule binds across the dimer.</text>
</comment>
<comment type="subcellular location">
    <subcellularLocation>
        <location evidence="1">Cytoplasm</location>
    </subcellularLocation>
</comment>
<comment type="domain">
    <text evidence="1">Consists of two distinct domains, a catalytic core and a N-terminal extension that is involved in tRNA binding.</text>
</comment>
<comment type="similarity">
    <text evidence="1">Belongs to the class-II aminoacyl-tRNA synthetase family. Type-1 seryl-tRNA synthetase subfamily.</text>
</comment>
<dbReference type="EC" id="6.1.1.11" evidence="1"/>
<dbReference type="EMBL" id="CP001628">
    <property type="protein sequence ID" value="ACS29680.1"/>
    <property type="molecule type" value="Genomic_DNA"/>
</dbReference>
<dbReference type="RefSeq" id="WP_010079681.1">
    <property type="nucleotide sequence ID" value="NC_012803.1"/>
</dbReference>
<dbReference type="SMR" id="C5C878"/>
<dbReference type="STRING" id="465515.Mlut_01150"/>
<dbReference type="EnsemblBacteria" id="ACS29680">
    <property type="protein sequence ID" value="ACS29680"/>
    <property type="gene ID" value="Mlut_01150"/>
</dbReference>
<dbReference type="GeneID" id="93344296"/>
<dbReference type="KEGG" id="mlu:Mlut_01150"/>
<dbReference type="PATRIC" id="fig|465515.4.peg.93"/>
<dbReference type="eggNOG" id="COG0172">
    <property type="taxonomic scope" value="Bacteria"/>
</dbReference>
<dbReference type="HOGENOM" id="CLU_023797_0_1_11"/>
<dbReference type="UniPathway" id="UPA00906">
    <property type="reaction ID" value="UER00895"/>
</dbReference>
<dbReference type="Proteomes" id="UP000000738">
    <property type="component" value="Chromosome"/>
</dbReference>
<dbReference type="GO" id="GO:0005737">
    <property type="term" value="C:cytoplasm"/>
    <property type="evidence" value="ECO:0007669"/>
    <property type="project" value="UniProtKB-SubCell"/>
</dbReference>
<dbReference type="GO" id="GO:0005524">
    <property type="term" value="F:ATP binding"/>
    <property type="evidence" value="ECO:0007669"/>
    <property type="project" value="UniProtKB-UniRule"/>
</dbReference>
<dbReference type="GO" id="GO:0004828">
    <property type="term" value="F:serine-tRNA ligase activity"/>
    <property type="evidence" value="ECO:0007669"/>
    <property type="project" value="UniProtKB-UniRule"/>
</dbReference>
<dbReference type="GO" id="GO:0016260">
    <property type="term" value="P:selenocysteine biosynthetic process"/>
    <property type="evidence" value="ECO:0007669"/>
    <property type="project" value="UniProtKB-UniRule"/>
</dbReference>
<dbReference type="GO" id="GO:0006434">
    <property type="term" value="P:seryl-tRNA aminoacylation"/>
    <property type="evidence" value="ECO:0007669"/>
    <property type="project" value="UniProtKB-UniRule"/>
</dbReference>
<dbReference type="CDD" id="cd00770">
    <property type="entry name" value="SerRS_core"/>
    <property type="match status" value="1"/>
</dbReference>
<dbReference type="Gene3D" id="3.30.930.10">
    <property type="entry name" value="Bira Bifunctional Protein, Domain 2"/>
    <property type="match status" value="1"/>
</dbReference>
<dbReference type="Gene3D" id="1.10.287.40">
    <property type="entry name" value="Serine-tRNA synthetase, tRNA binding domain"/>
    <property type="match status" value="1"/>
</dbReference>
<dbReference type="HAMAP" id="MF_00176">
    <property type="entry name" value="Ser_tRNA_synth_type1"/>
    <property type="match status" value="1"/>
</dbReference>
<dbReference type="InterPro" id="IPR002314">
    <property type="entry name" value="aa-tRNA-synt_IIb"/>
</dbReference>
<dbReference type="InterPro" id="IPR006195">
    <property type="entry name" value="aa-tRNA-synth_II"/>
</dbReference>
<dbReference type="InterPro" id="IPR045864">
    <property type="entry name" value="aa-tRNA-synth_II/BPL/LPL"/>
</dbReference>
<dbReference type="InterPro" id="IPR002317">
    <property type="entry name" value="Ser-tRNA-ligase_type_1"/>
</dbReference>
<dbReference type="InterPro" id="IPR015866">
    <property type="entry name" value="Ser-tRNA-synth_1_N"/>
</dbReference>
<dbReference type="InterPro" id="IPR042103">
    <property type="entry name" value="SerRS_1_N_sf"/>
</dbReference>
<dbReference type="InterPro" id="IPR033729">
    <property type="entry name" value="SerRS_core"/>
</dbReference>
<dbReference type="InterPro" id="IPR010978">
    <property type="entry name" value="tRNA-bd_arm"/>
</dbReference>
<dbReference type="NCBIfam" id="TIGR00414">
    <property type="entry name" value="serS"/>
    <property type="match status" value="1"/>
</dbReference>
<dbReference type="PANTHER" id="PTHR11778">
    <property type="entry name" value="SERYL-TRNA SYNTHETASE"/>
    <property type="match status" value="1"/>
</dbReference>
<dbReference type="Pfam" id="PF02403">
    <property type="entry name" value="Seryl_tRNA_N"/>
    <property type="match status" value="1"/>
</dbReference>
<dbReference type="Pfam" id="PF00587">
    <property type="entry name" value="tRNA-synt_2b"/>
    <property type="match status" value="1"/>
</dbReference>
<dbReference type="PIRSF" id="PIRSF001529">
    <property type="entry name" value="Ser-tRNA-synth_IIa"/>
    <property type="match status" value="1"/>
</dbReference>
<dbReference type="PRINTS" id="PR00981">
    <property type="entry name" value="TRNASYNTHSER"/>
</dbReference>
<dbReference type="SUPFAM" id="SSF55681">
    <property type="entry name" value="Class II aaRS and biotin synthetases"/>
    <property type="match status" value="1"/>
</dbReference>
<dbReference type="SUPFAM" id="SSF46589">
    <property type="entry name" value="tRNA-binding arm"/>
    <property type="match status" value="1"/>
</dbReference>
<dbReference type="PROSITE" id="PS50862">
    <property type="entry name" value="AA_TRNA_LIGASE_II"/>
    <property type="match status" value="1"/>
</dbReference>
<protein>
    <recommendedName>
        <fullName evidence="1">Serine--tRNA ligase</fullName>
        <ecNumber evidence="1">6.1.1.11</ecNumber>
    </recommendedName>
    <alternativeName>
        <fullName evidence="1">Seryl-tRNA synthetase</fullName>
        <shortName evidence="1">SerRS</shortName>
    </alternativeName>
    <alternativeName>
        <fullName evidence="1">Seryl-tRNA(Ser/Sec) synthetase</fullName>
    </alternativeName>
</protein>
<reference key="1">
    <citation type="journal article" date="2010" name="J. Bacteriol.">
        <title>Genome sequence of the Fleming strain of Micrococcus luteus, a simple free-living actinobacterium.</title>
        <authorList>
            <person name="Young M."/>
            <person name="Artsatbanov V."/>
            <person name="Beller H.R."/>
            <person name="Chandra G."/>
            <person name="Chater K.F."/>
            <person name="Dover L.G."/>
            <person name="Goh E.B."/>
            <person name="Kahan T."/>
            <person name="Kaprelyants A.S."/>
            <person name="Kyrpides N."/>
            <person name="Lapidus A."/>
            <person name="Lowry S.R."/>
            <person name="Lykidis A."/>
            <person name="Mahillon J."/>
            <person name="Markowitz V."/>
            <person name="Mavromatis K."/>
            <person name="Mukamolova G.V."/>
            <person name="Oren A."/>
            <person name="Rokem J.S."/>
            <person name="Smith M.C."/>
            <person name="Young D.I."/>
            <person name="Greenblatt C.L."/>
        </authorList>
    </citation>
    <scope>NUCLEOTIDE SEQUENCE [LARGE SCALE GENOMIC DNA]</scope>
    <source>
        <strain>ATCC 4698 / DSM 20030 / JCM 1464 / CCM 169 / CCUG 5858 / IAM 1056 / NBRC 3333 / NCIMB 9278 / NCTC 2665 / VKM Ac-2230</strain>
    </source>
</reference>
<name>SYS_MICLC</name>
<organism>
    <name type="scientific">Micrococcus luteus (strain ATCC 4698 / DSM 20030 / JCM 1464 / CCM 169 / CCUG 5858 / IAM 1056 / NBRC 3333 / NCIMB 9278 / NCTC 2665 / VKM Ac-2230)</name>
    <name type="common">Micrococcus lysodeikticus</name>
    <dbReference type="NCBI Taxonomy" id="465515"/>
    <lineage>
        <taxon>Bacteria</taxon>
        <taxon>Bacillati</taxon>
        <taxon>Actinomycetota</taxon>
        <taxon>Actinomycetes</taxon>
        <taxon>Micrococcales</taxon>
        <taxon>Micrococcaceae</taxon>
        <taxon>Micrococcus</taxon>
    </lineage>
</organism>
<gene>
    <name evidence="1" type="primary">serS</name>
    <name type="ordered locus">Mlut_01150</name>
</gene>